<dbReference type="EMBL" id="U06949">
    <property type="protein sequence ID" value="AAA21574.1"/>
    <property type="molecule type" value="Genomic_DNA"/>
</dbReference>
<dbReference type="EMBL" id="BA000031">
    <property type="protein sequence ID" value="BAC60374.1"/>
    <property type="molecule type" value="Genomic_DNA"/>
</dbReference>
<dbReference type="RefSeq" id="NP_798490.1">
    <property type="nucleotide sequence ID" value="NC_004603.1"/>
</dbReference>
<dbReference type="RefSeq" id="WP_005494483.1">
    <property type="nucleotide sequence ID" value="NC_004603.1"/>
</dbReference>
<dbReference type="SMR" id="P46233"/>
<dbReference type="GeneID" id="1189623"/>
<dbReference type="KEGG" id="vpa:VP2111"/>
<dbReference type="PATRIC" id="fig|223926.6.peg.2021"/>
<dbReference type="eggNOG" id="COG2885">
    <property type="taxonomic scope" value="Bacteria"/>
</dbReference>
<dbReference type="HOGENOM" id="CLU_069369_1_0_6"/>
<dbReference type="Proteomes" id="UP000002493">
    <property type="component" value="Chromosome 1"/>
</dbReference>
<dbReference type="GO" id="GO:0009279">
    <property type="term" value="C:cell outer membrane"/>
    <property type="evidence" value="ECO:0007669"/>
    <property type="project" value="InterPro"/>
</dbReference>
<dbReference type="GO" id="GO:0005886">
    <property type="term" value="C:plasma membrane"/>
    <property type="evidence" value="ECO:0007669"/>
    <property type="project" value="UniProtKB-SubCell"/>
</dbReference>
<dbReference type="GO" id="GO:0097588">
    <property type="term" value="P:archaeal or bacterial-type flagellum-dependent cell motility"/>
    <property type="evidence" value="ECO:0007669"/>
    <property type="project" value="UniProtKB-KW"/>
</dbReference>
<dbReference type="CDD" id="cd07185">
    <property type="entry name" value="OmpA_C-like"/>
    <property type="match status" value="1"/>
</dbReference>
<dbReference type="Gene3D" id="2.60.40.2540">
    <property type="match status" value="1"/>
</dbReference>
<dbReference type="Gene3D" id="3.30.1330.60">
    <property type="entry name" value="OmpA-like domain"/>
    <property type="match status" value="1"/>
</dbReference>
<dbReference type="InterPro" id="IPR050330">
    <property type="entry name" value="Bact_OuterMem_StrucFunc"/>
</dbReference>
<dbReference type="InterPro" id="IPR041544">
    <property type="entry name" value="MotY_N"/>
</dbReference>
<dbReference type="InterPro" id="IPR006665">
    <property type="entry name" value="OmpA-like"/>
</dbReference>
<dbReference type="InterPro" id="IPR006690">
    <property type="entry name" value="OMPA-like_CS"/>
</dbReference>
<dbReference type="InterPro" id="IPR036737">
    <property type="entry name" value="OmpA-like_sf"/>
</dbReference>
<dbReference type="NCBIfam" id="NF047620">
    <property type="entry name" value="FlgprotMotYVib"/>
    <property type="match status" value="1"/>
</dbReference>
<dbReference type="PANTHER" id="PTHR30329:SF21">
    <property type="entry name" value="LIPOPROTEIN YIAD-RELATED"/>
    <property type="match status" value="1"/>
</dbReference>
<dbReference type="PANTHER" id="PTHR30329">
    <property type="entry name" value="STATOR ELEMENT OF FLAGELLAR MOTOR COMPLEX"/>
    <property type="match status" value="1"/>
</dbReference>
<dbReference type="Pfam" id="PF18393">
    <property type="entry name" value="MotY_N"/>
    <property type="match status" value="1"/>
</dbReference>
<dbReference type="Pfam" id="PF00691">
    <property type="entry name" value="OmpA"/>
    <property type="match status" value="1"/>
</dbReference>
<dbReference type="PRINTS" id="PR01023">
    <property type="entry name" value="NAFLGMOTY"/>
</dbReference>
<dbReference type="SUPFAM" id="SSF103088">
    <property type="entry name" value="OmpA-like"/>
    <property type="match status" value="1"/>
</dbReference>
<dbReference type="PROSITE" id="PS01068">
    <property type="entry name" value="OMPA_1"/>
    <property type="match status" value="1"/>
</dbReference>
<dbReference type="PROSITE" id="PS51123">
    <property type="entry name" value="OMPA_2"/>
    <property type="match status" value="1"/>
</dbReference>
<keyword id="KW-1003">Cell membrane</keyword>
<keyword id="KW-0283">Flagellar rotation</keyword>
<keyword id="KW-0472">Membrane</keyword>
<keyword id="KW-0732">Signal</keyword>
<sequence length="293" mass="33406">MNKWLITSGVMLSLLSANSYAVMGKRYVATPQQSQWEMVVNTPLECQLVHPIPSFGDAVFSSRASKKINLDFELKMRRPMGETRNVSLISMPPPWRPGEHADRITNLKFFKQFDGYVGGQTAWGILSELEKGRYPTFSYQDWQSRDQRIEVALSSVLFQSKYNAFSDCIANLLKYSFEDIAFTILHYERQGDQLTKASKKRLAQIADYVRHNQDIDLVLVATYTDSTDGKSESQSLSERRAESLRTYFESLGLPEDRIQVQGYGKRRPIADNGTPIGKDKNRRVVISLGRTQV</sequence>
<gene>
    <name evidence="3" type="primary">motY</name>
    <name type="ordered locus">VP2111</name>
</gene>
<protein>
    <recommendedName>
        <fullName evidence="4">Sodium-type flagellar protein MotY</fullName>
    </recommendedName>
</protein>
<reference key="1">
    <citation type="journal article" date="1994" name="J. Bacteriol.">
        <title>MotY, a component of the sodium-type flagellar motor.</title>
        <authorList>
            <person name="McCarter L.L."/>
        </authorList>
    </citation>
    <scope>NUCLEOTIDE SEQUENCE [GENOMIC DNA]</scope>
    <scope>FUNCTION</scope>
    <source>
        <strain>BB22</strain>
    </source>
</reference>
<reference key="2">
    <citation type="journal article" date="2003" name="Lancet">
        <title>Genome sequence of Vibrio parahaemolyticus: a pathogenic mechanism distinct from that of V. cholerae.</title>
        <authorList>
            <person name="Makino K."/>
            <person name="Oshima K."/>
            <person name="Kurokawa K."/>
            <person name="Yokoyama K."/>
            <person name="Uda T."/>
            <person name="Tagomori K."/>
            <person name="Iijima Y."/>
            <person name="Najima M."/>
            <person name="Nakano M."/>
            <person name="Yamashita A."/>
            <person name="Kubota Y."/>
            <person name="Kimura S."/>
            <person name="Yasunaga T."/>
            <person name="Honda T."/>
            <person name="Shinagawa H."/>
            <person name="Hattori M."/>
            <person name="Iida T."/>
        </authorList>
    </citation>
    <scope>NUCLEOTIDE SEQUENCE [LARGE SCALE GENOMIC DNA]</scope>
    <source>
        <strain>RIMD 2210633</strain>
    </source>
</reference>
<feature type="signal peptide" evidence="1">
    <location>
        <begin position="1"/>
        <end position="21"/>
    </location>
</feature>
<feature type="chain" id="PRO_0000020136" description="Sodium-type flagellar protein MotY">
    <location>
        <begin position="22"/>
        <end position="293"/>
    </location>
</feature>
<feature type="domain" description="OmpA-like" evidence="2">
    <location>
        <begin position="175"/>
        <end position="292"/>
    </location>
</feature>
<organism>
    <name type="scientific">Vibrio parahaemolyticus serotype O3:K6 (strain RIMD 2210633)</name>
    <dbReference type="NCBI Taxonomy" id="223926"/>
    <lineage>
        <taxon>Bacteria</taxon>
        <taxon>Pseudomonadati</taxon>
        <taxon>Pseudomonadota</taxon>
        <taxon>Gammaproteobacteria</taxon>
        <taxon>Vibrionales</taxon>
        <taxon>Vibrionaceae</taxon>
        <taxon>Vibrio</taxon>
    </lineage>
</organism>
<evidence type="ECO:0000255" key="1"/>
<evidence type="ECO:0000255" key="2">
    <source>
        <dbReference type="PROSITE-ProRule" id="PRU00473"/>
    </source>
</evidence>
<evidence type="ECO:0000303" key="3">
    <source>
    </source>
</evidence>
<evidence type="ECO:0000305" key="4"/>
<evidence type="ECO:0000305" key="5">
    <source>
    </source>
</evidence>
<accession>P46233</accession>
<proteinExistence type="inferred from homology"/>
<comment type="function">
    <text evidence="5">May play the role of a stator in the sodium flagellar motor, stabilizing the force-generating unit through direct interaction with the cell wall.</text>
</comment>
<comment type="subcellular location">
    <subcellularLocation>
        <location evidence="4">Cell membrane</location>
        <topology evidence="4">Peripheral membrane protein</topology>
    </subcellularLocation>
</comment>
<name>MOTY_VIBPA</name>